<organism>
    <name type="scientific">Solanum tuberosum</name>
    <name type="common">Potato</name>
    <dbReference type="NCBI Taxonomy" id="4113"/>
    <lineage>
        <taxon>Eukaryota</taxon>
        <taxon>Viridiplantae</taxon>
        <taxon>Streptophyta</taxon>
        <taxon>Embryophyta</taxon>
        <taxon>Tracheophyta</taxon>
        <taxon>Spermatophyta</taxon>
        <taxon>Magnoliopsida</taxon>
        <taxon>eudicotyledons</taxon>
        <taxon>Gunneridae</taxon>
        <taxon>Pentapetalae</taxon>
        <taxon>asterids</taxon>
        <taxon>lamiids</taxon>
        <taxon>Solanales</taxon>
        <taxon>Solanaceae</taxon>
        <taxon>Solanoideae</taxon>
        <taxon>Solaneae</taxon>
        <taxon>Solanum</taxon>
    </lineage>
</organism>
<keyword id="KW-0067">ATP-binding</keyword>
<keyword id="KW-0138">CF(0)</keyword>
<keyword id="KW-0375">Hydrogen ion transport</keyword>
<keyword id="KW-0406">Ion transport</keyword>
<keyword id="KW-0446">Lipid-binding</keyword>
<keyword id="KW-0472">Membrane</keyword>
<keyword id="KW-0496">Mitochondrion</keyword>
<keyword id="KW-0547">Nucleotide-binding</keyword>
<keyword id="KW-1185">Reference proteome</keyword>
<keyword id="KW-0691">RNA editing</keyword>
<keyword id="KW-0812">Transmembrane</keyword>
<keyword id="KW-1133">Transmembrane helix</keyword>
<keyword id="KW-0813">Transport</keyword>
<name>ATP9_SOLTU</name>
<proteinExistence type="evidence at transcript level"/>
<sequence>MLEGAKLMGAGAATIALAGAAIGIGNVFSSLIHSVARNPSLAKQLFGYAILGFALTEAIALFALMMAFLILFVF</sequence>
<accession>P60114</accession>
<accession>P14572</accession>
<feature type="chain" id="PRO_0000112222" description="ATP synthase subunit 9, mitochondrial">
    <location>
        <begin position="1"/>
        <end position="74"/>
    </location>
</feature>
<feature type="transmembrane region" description="Helical" evidence="2">
    <location>
        <begin position="8"/>
        <end position="28"/>
    </location>
</feature>
<feature type="transmembrane region" description="Helical" evidence="2">
    <location>
        <begin position="50"/>
        <end position="70"/>
    </location>
</feature>
<feature type="site" description="Reversibly protonated during proton transport" evidence="1">
    <location>
        <position position="57"/>
    </location>
</feature>
<protein>
    <recommendedName>
        <fullName>ATP synthase subunit 9, mitochondrial</fullName>
    </recommendedName>
    <alternativeName>
        <fullName>Lipid-binding protein</fullName>
    </alternativeName>
</protein>
<comment type="function">
    <text>This protein is one of the chains of the nonenzymatic membrane component (F0) of mitochondrial ATPase.</text>
</comment>
<comment type="subunit">
    <text>F-type ATPases have 2 components, CF(1) - the catalytic core - and CF(0) - the membrane proton channel. CF(1) has five subunits: alpha(3), beta(3), gamma(1), delta(1), epsilon(1). CF(0) has three main subunits: a, b and c.</text>
</comment>
<comment type="subcellular location">
    <subcellularLocation>
        <location evidence="4">Mitochondrion membrane</location>
        <topology evidence="4">Multi-pass membrane protein</topology>
    </subcellularLocation>
</comment>
<comment type="RNA editing">
    <location>
        <position position="7" evidence="3"/>
    </location>
    <location>
        <position position="17" evidence="3"/>
    </location>
    <location>
        <position position="28" evidence="3"/>
    </location>
    <location>
        <position position="31" evidence="3"/>
    </location>
    <location>
        <position position="61" evidence="3"/>
    </location>
    <location>
        <position position="64" evidence="3"/>
    </location>
    <location>
        <position position="71" evidence="3"/>
    </location>
    <location>
        <position position="75" evidence="3"/>
    </location>
    <text>The stop codon at position 75 is created by RNA editing.</text>
</comment>
<comment type="similarity">
    <text evidence="4">Belongs to the ATPase C chain family.</text>
</comment>
<dbReference type="EMBL" id="X63609">
    <property type="protein sequence ID" value="CAA45154.1"/>
    <property type="molecule type" value="mRNA"/>
</dbReference>
<dbReference type="EMBL" id="X63610">
    <property type="protein sequence ID" value="CAA45155.1"/>
    <property type="status" value="ALT_SEQ"/>
    <property type="molecule type" value="Genomic_DNA"/>
</dbReference>
<dbReference type="SMR" id="P60114"/>
<dbReference type="FunCoup" id="P60114">
    <property type="interactions" value="618"/>
</dbReference>
<dbReference type="STRING" id="4113.P60114"/>
<dbReference type="PaxDb" id="4113-PGSC0003DMT400005614"/>
<dbReference type="eggNOG" id="ENOG502S4GY">
    <property type="taxonomic scope" value="Eukaryota"/>
</dbReference>
<dbReference type="InParanoid" id="P60114"/>
<dbReference type="Proteomes" id="UP000011115">
    <property type="component" value="Unassembled WGS sequence"/>
</dbReference>
<dbReference type="ExpressionAtlas" id="P60114">
    <property type="expression patterns" value="baseline"/>
</dbReference>
<dbReference type="GO" id="GO:0031966">
    <property type="term" value="C:mitochondrial membrane"/>
    <property type="evidence" value="ECO:0007669"/>
    <property type="project" value="UniProtKB-SubCell"/>
</dbReference>
<dbReference type="GO" id="GO:0045259">
    <property type="term" value="C:proton-transporting ATP synthase complex"/>
    <property type="evidence" value="ECO:0007669"/>
    <property type="project" value="UniProtKB-KW"/>
</dbReference>
<dbReference type="GO" id="GO:0033177">
    <property type="term" value="C:proton-transporting two-sector ATPase complex, proton-transporting domain"/>
    <property type="evidence" value="ECO:0007669"/>
    <property type="project" value="InterPro"/>
</dbReference>
<dbReference type="GO" id="GO:0005524">
    <property type="term" value="F:ATP binding"/>
    <property type="evidence" value="ECO:0007669"/>
    <property type="project" value="UniProtKB-KW"/>
</dbReference>
<dbReference type="GO" id="GO:0008289">
    <property type="term" value="F:lipid binding"/>
    <property type="evidence" value="ECO:0007669"/>
    <property type="project" value="UniProtKB-KW"/>
</dbReference>
<dbReference type="GO" id="GO:0015078">
    <property type="term" value="F:proton transmembrane transporter activity"/>
    <property type="evidence" value="ECO:0007669"/>
    <property type="project" value="InterPro"/>
</dbReference>
<dbReference type="GO" id="GO:0015986">
    <property type="term" value="P:proton motive force-driven ATP synthesis"/>
    <property type="evidence" value="ECO:0000318"/>
    <property type="project" value="GO_Central"/>
</dbReference>
<dbReference type="CDD" id="cd18182">
    <property type="entry name" value="ATP-synt_Fo_c_ATP5G3"/>
    <property type="match status" value="1"/>
</dbReference>
<dbReference type="FunFam" id="1.20.20.10:FF:000005">
    <property type="entry name" value="ATP synthase subunit 9, mitochondrial"/>
    <property type="match status" value="1"/>
</dbReference>
<dbReference type="Gene3D" id="1.20.20.10">
    <property type="entry name" value="F1F0 ATP synthase subunit C"/>
    <property type="match status" value="1"/>
</dbReference>
<dbReference type="HAMAP" id="MF_01396">
    <property type="entry name" value="ATP_synth_c_bact"/>
    <property type="match status" value="1"/>
</dbReference>
<dbReference type="InterPro" id="IPR000454">
    <property type="entry name" value="ATP_synth_F0_csu"/>
</dbReference>
<dbReference type="InterPro" id="IPR020537">
    <property type="entry name" value="ATP_synth_F0_csu_DDCD_BS"/>
</dbReference>
<dbReference type="InterPro" id="IPR038662">
    <property type="entry name" value="ATP_synth_F0_csu_sf"/>
</dbReference>
<dbReference type="InterPro" id="IPR002379">
    <property type="entry name" value="ATPase_proteolipid_c-like_dom"/>
</dbReference>
<dbReference type="InterPro" id="IPR035921">
    <property type="entry name" value="F/V-ATP_Csub_sf"/>
</dbReference>
<dbReference type="PANTHER" id="PTHR10031">
    <property type="entry name" value="ATP SYNTHASE LIPID-BINDING PROTEIN, MITOCHONDRIAL"/>
    <property type="match status" value="1"/>
</dbReference>
<dbReference type="PANTHER" id="PTHR10031:SF0">
    <property type="entry name" value="ATPASE PROTEIN 9"/>
    <property type="match status" value="1"/>
</dbReference>
<dbReference type="Pfam" id="PF00137">
    <property type="entry name" value="ATP-synt_C"/>
    <property type="match status" value="1"/>
</dbReference>
<dbReference type="PRINTS" id="PR00124">
    <property type="entry name" value="ATPASEC"/>
</dbReference>
<dbReference type="SUPFAM" id="SSF81333">
    <property type="entry name" value="F1F0 ATP synthase subunit C"/>
    <property type="match status" value="1"/>
</dbReference>
<dbReference type="PROSITE" id="PS00605">
    <property type="entry name" value="ATPASE_C"/>
    <property type="match status" value="1"/>
</dbReference>
<reference key="1">
    <citation type="journal article" date="1993" name="Plant Sci.">
        <title>The potato mitochondrial ATP synthase subunit 9: gene structure, RNA editing and partial protein sequence.</title>
        <authorList>
            <person name="Dell'Orto P."/>
            <person name="Moenne A."/>
            <person name="Graves P.V."/>
            <person name="Jordana X."/>
        </authorList>
    </citation>
    <scope>NUCLEOTIDE SEQUENCE [GENOMIC DNA / MRNA]</scope>
    <scope>RNA EDITING</scope>
    <source>
        <strain>cv. Bintje</strain>
        <tissue>Tuber</tissue>
    </source>
</reference>
<evidence type="ECO:0000250" key="1"/>
<evidence type="ECO:0000255" key="2"/>
<evidence type="ECO:0000269" key="3">
    <source ref="1"/>
</evidence>
<evidence type="ECO:0000305" key="4"/>
<geneLocation type="mitochondrion"/>
<gene>
    <name type="primary">ATP9</name>
</gene>